<accession>A6W9V1</accession>
<keyword id="KW-0050">Antiport</keyword>
<keyword id="KW-1003">Cell membrane</keyword>
<keyword id="KW-0406">Ion transport</keyword>
<keyword id="KW-0472">Membrane</keyword>
<keyword id="KW-1185">Reference proteome</keyword>
<keyword id="KW-0915">Sodium</keyword>
<keyword id="KW-0739">Sodium transport</keyword>
<keyword id="KW-0812">Transmembrane</keyword>
<keyword id="KW-1133">Transmembrane helix</keyword>
<keyword id="KW-0813">Transport</keyword>
<proteinExistence type="inferred from homology"/>
<organism>
    <name type="scientific">Kineococcus radiotolerans (strain ATCC BAA-149 / DSM 14245 / SRS30216)</name>
    <dbReference type="NCBI Taxonomy" id="266940"/>
    <lineage>
        <taxon>Bacteria</taxon>
        <taxon>Bacillati</taxon>
        <taxon>Actinomycetota</taxon>
        <taxon>Actinomycetes</taxon>
        <taxon>Kineosporiales</taxon>
        <taxon>Kineosporiaceae</taxon>
        <taxon>Kineococcus</taxon>
    </lineage>
</organism>
<dbReference type="EMBL" id="CP000750">
    <property type="protein sequence ID" value="ABS03590.1"/>
    <property type="molecule type" value="Genomic_DNA"/>
</dbReference>
<dbReference type="SMR" id="A6W9V1"/>
<dbReference type="STRING" id="266940.Krad_2105"/>
<dbReference type="KEGG" id="kra:Krad_2105"/>
<dbReference type="eggNOG" id="COG3004">
    <property type="taxonomic scope" value="Bacteria"/>
</dbReference>
<dbReference type="HOGENOM" id="CLU_015803_0_0_11"/>
<dbReference type="OrthoDB" id="9808135at2"/>
<dbReference type="Proteomes" id="UP000001116">
    <property type="component" value="Chromosome"/>
</dbReference>
<dbReference type="GO" id="GO:0005886">
    <property type="term" value="C:plasma membrane"/>
    <property type="evidence" value="ECO:0007669"/>
    <property type="project" value="UniProtKB-SubCell"/>
</dbReference>
<dbReference type="GO" id="GO:0015385">
    <property type="term" value="F:sodium:proton antiporter activity"/>
    <property type="evidence" value="ECO:0007669"/>
    <property type="project" value="TreeGrafter"/>
</dbReference>
<dbReference type="GO" id="GO:0006885">
    <property type="term" value="P:regulation of pH"/>
    <property type="evidence" value="ECO:0007669"/>
    <property type="project" value="InterPro"/>
</dbReference>
<dbReference type="Gene3D" id="1.20.1530.10">
    <property type="entry name" value="Na+/H+ antiporter like domain"/>
    <property type="match status" value="1"/>
</dbReference>
<dbReference type="HAMAP" id="MF_01844">
    <property type="entry name" value="NhaA"/>
    <property type="match status" value="1"/>
</dbReference>
<dbReference type="InterPro" id="IPR023171">
    <property type="entry name" value="Na/H_antiporter_dom_sf"/>
</dbReference>
<dbReference type="InterPro" id="IPR004670">
    <property type="entry name" value="NhaA"/>
</dbReference>
<dbReference type="NCBIfam" id="TIGR00773">
    <property type="entry name" value="NhaA"/>
    <property type="match status" value="1"/>
</dbReference>
<dbReference type="PANTHER" id="PTHR30341:SF0">
    <property type="entry name" value="NA(+)_H(+) ANTIPORTER NHAA"/>
    <property type="match status" value="1"/>
</dbReference>
<dbReference type="PANTHER" id="PTHR30341">
    <property type="entry name" value="SODIUM ION/PROTON ANTIPORTER NHAA-RELATED"/>
    <property type="match status" value="1"/>
</dbReference>
<dbReference type="Pfam" id="PF06965">
    <property type="entry name" value="Na_H_antiport_1"/>
    <property type="match status" value="1"/>
</dbReference>
<reference key="1">
    <citation type="journal article" date="2008" name="PLoS ONE">
        <title>Survival in nuclear waste, extreme resistance, and potential applications gleaned from the genome sequence of Kineococcus radiotolerans SRS30216.</title>
        <authorList>
            <person name="Bagwell C.E."/>
            <person name="Bhat S."/>
            <person name="Hawkins G.M."/>
            <person name="Smith B.W."/>
            <person name="Biswas T."/>
            <person name="Hoover T.R."/>
            <person name="Saunders E."/>
            <person name="Han C.S."/>
            <person name="Tsodikov O.V."/>
            <person name="Shimkets L.J."/>
        </authorList>
    </citation>
    <scope>NUCLEOTIDE SEQUENCE [LARGE SCALE GENOMIC DNA]</scope>
    <source>
        <strain>ATCC BAA-149 / DSM 14245 / SRS30216</strain>
    </source>
</reference>
<gene>
    <name evidence="1" type="primary">nhaA2</name>
    <name type="ordered locus">Krad_2105</name>
</gene>
<protein>
    <recommendedName>
        <fullName evidence="1">Na(+)/H(+) antiporter NhaA 2</fullName>
    </recommendedName>
    <alternativeName>
        <fullName evidence="1">Sodium/proton antiporter NhaA 2</fullName>
    </alternativeName>
</protein>
<feature type="chain" id="PRO_0000334326" description="Na(+)/H(+) antiporter NhaA 2">
    <location>
        <begin position="1"/>
        <end position="462"/>
    </location>
</feature>
<feature type="transmembrane region" description="Helical" evidence="1">
    <location>
        <begin position="52"/>
        <end position="72"/>
    </location>
</feature>
<feature type="transmembrane region" description="Helical" evidence="1">
    <location>
        <begin position="96"/>
        <end position="116"/>
    </location>
</feature>
<feature type="transmembrane region" description="Helical" evidence="1">
    <location>
        <begin position="134"/>
        <end position="154"/>
    </location>
</feature>
<feature type="transmembrane region" description="Helical" evidence="1">
    <location>
        <begin position="165"/>
        <end position="185"/>
    </location>
</feature>
<feature type="transmembrane region" description="Helical" evidence="1">
    <location>
        <begin position="195"/>
        <end position="215"/>
    </location>
</feature>
<feature type="transmembrane region" description="Helical" evidence="1">
    <location>
        <begin position="218"/>
        <end position="238"/>
    </location>
</feature>
<feature type="transmembrane region" description="Helical" evidence="1">
    <location>
        <begin position="244"/>
        <end position="264"/>
    </location>
</feature>
<feature type="transmembrane region" description="Helical" evidence="1">
    <location>
        <begin position="309"/>
        <end position="329"/>
    </location>
</feature>
<feature type="transmembrane region" description="Helical" evidence="1">
    <location>
        <begin position="337"/>
        <end position="357"/>
    </location>
</feature>
<feature type="transmembrane region" description="Helical" evidence="1">
    <location>
        <begin position="382"/>
        <end position="402"/>
    </location>
</feature>
<feature type="transmembrane region" description="Helical" evidence="1">
    <location>
        <begin position="408"/>
        <end position="428"/>
    </location>
</feature>
<feature type="region of interest" description="Disordered" evidence="2">
    <location>
        <begin position="1"/>
        <end position="31"/>
    </location>
</feature>
<feature type="compositionally biased region" description="Pro residues" evidence="2">
    <location>
        <begin position="16"/>
        <end position="27"/>
    </location>
</feature>
<sequence length="462" mass="48409">MKSSTREQTPVTSPTPHDPTPPTPPRGSTPLFSRGSWLETRRITDVLRKETIGGALLLLGTVVALVWANSPWSSSYAGLRDTVIAPSLLHPLHLDLTLGQWAADGLLAIFFFIAGLELKREFVAGDLRDPRRALVPVAAAVGGMAVPAVVYVLVARSAGDGALNGWAIPTATDIAFAVAVLAVISTHLPTALRTFLLTLAVVDDLLAITIIAIFYTDTLAVLPLLGALAVIAVFGLLVQKRIRSWWLLIPLAVVAWALMHASGIHATVAGVLLGFTVPVLRSRAAGGPEAGPGMAEHFEHVWRPLSAGFAVPVFAFFSAGVTVGGLSGLVDSLQDRVALGIVAGLVVGKAAGILGATAAVSRFTRARLDPSLSWWDVLGASLLGGIGFTVSLLIGELAFGAGSVRDEHVKVGVLTGSLLAAALAAVVLRARNRVYRRLHEAERVDEDADGVPDVYQAPRLNG</sequence>
<name>NHAA2_KINRD</name>
<comment type="function">
    <text evidence="1">Na(+)/H(+) antiporter that extrudes sodium in exchange for external protons.</text>
</comment>
<comment type="catalytic activity">
    <reaction evidence="1">
        <text>Na(+)(in) + 2 H(+)(out) = Na(+)(out) + 2 H(+)(in)</text>
        <dbReference type="Rhea" id="RHEA:29251"/>
        <dbReference type="ChEBI" id="CHEBI:15378"/>
        <dbReference type="ChEBI" id="CHEBI:29101"/>
    </reaction>
    <physiologicalReaction direction="left-to-right" evidence="1">
        <dbReference type="Rhea" id="RHEA:29252"/>
    </physiologicalReaction>
</comment>
<comment type="subcellular location">
    <subcellularLocation>
        <location evidence="1">Cell membrane</location>
        <topology evidence="1">Multi-pass membrane protein</topology>
    </subcellularLocation>
</comment>
<comment type="similarity">
    <text evidence="1">Belongs to the NhaA Na(+)/H(+) (TC 2.A.33) antiporter family.</text>
</comment>
<evidence type="ECO:0000255" key="1">
    <source>
        <dbReference type="HAMAP-Rule" id="MF_01844"/>
    </source>
</evidence>
<evidence type="ECO:0000256" key="2">
    <source>
        <dbReference type="SAM" id="MobiDB-lite"/>
    </source>
</evidence>